<keyword id="KW-1185">Reference proteome</keyword>
<keyword id="KW-0687">Ribonucleoprotein</keyword>
<keyword id="KW-0689">Ribosomal protein</keyword>
<keyword id="KW-0694">RNA-binding</keyword>
<keyword id="KW-0699">rRNA-binding</keyword>
<dbReference type="EMBL" id="BX248355">
    <property type="protein sequence ID" value="CAE48978.1"/>
    <property type="molecule type" value="Genomic_DNA"/>
</dbReference>
<dbReference type="RefSeq" id="WP_010934329.1">
    <property type="nucleotide sequence ID" value="NC_002935.2"/>
</dbReference>
<dbReference type="SMR" id="P61062"/>
<dbReference type="STRING" id="257309.DIP0474"/>
<dbReference type="GeneID" id="97331077"/>
<dbReference type="KEGG" id="cdi:DIP0474"/>
<dbReference type="HOGENOM" id="CLU_041575_5_0_11"/>
<dbReference type="Proteomes" id="UP000002198">
    <property type="component" value="Chromosome"/>
</dbReference>
<dbReference type="GO" id="GO:1990904">
    <property type="term" value="C:ribonucleoprotein complex"/>
    <property type="evidence" value="ECO:0007669"/>
    <property type="project" value="UniProtKB-KW"/>
</dbReference>
<dbReference type="GO" id="GO:0005840">
    <property type="term" value="C:ribosome"/>
    <property type="evidence" value="ECO:0007669"/>
    <property type="project" value="UniProtKB-KW"/>
</dbReference>
<dbReference type="GO" id="GO:0019843">
    <property type="term" value="F:rRNA binding"/>
    <property type="evidence" value="ECO:0007669"/>
    <property type="project" value="UniProtKB-UniRule"/>
</dbReference>
<dbReference type="GO" id="GO:0003735">
    <property type="term" value="F:structural constituent of ribosome"/>
    <property type="evidence" value="ECO:0007669"/>
    <property type="project" value="InterPro"/>
</dbReference>
<dbReference type="GO" id="GO:0006412">
    <property type="term" value="P:translation"/>
    <property type="evidence" value="ECO:0007669"/>
    <property type="project" value="UniProtKB-UniRule"/>
</dbReference>
<dbReference type="FunFam" id="3.40.1370.10:FF:000004">
    <property type="entry name" value="50S ribosomal protein L4"/>
    <property type="match status" value="1"/>
</dbReference>
<dbReference type="Gene3D" id="3.40.1370.10">
    <property type="match status" value="1"/>
</dbReference>
<dbReference type="HAMAP" id="MF_01328_B">
    <property type="entry name" value="Ribosomal_uL4_B"/>
    <property type="match status" value="1"/>
</dbReference>
<dbReference type="InterPro" id="IPR002136">
    <property type="entry name" value="Ribosomal_uL4"/>
</dbReference>
<dbReference type="InterPro" id="IPR013005">
    <property type="entry name" value="Ribosomal_uL4-like"/>
</dbReference>
<dbReference type="InterPro" id="IPR023574">
    <property type="entry name" value="Ribosomal_uL4_dom_sf"/>
</dbReference>
<dbReference type="NCBIfam" id="TIGR03953">
    <property type="entry name" value="rplD_bact"/>
    <property type="match status" value="1"/>
</dbReference>
<dbReference type="PANTHER" id="PTHR10746">
    <property type="entry name" value="50S RIBOSOMAL PROTEIN L4"/>
    <property type="match status" value="1"/>
</dbReference>
<dbReference type="PANTHER" id="PTHR10746:SF6">
    <property type="entry name" value="LARGE RIBOSOMAL SUBUNIT PROTEIN UL4M"/>
    <property type="match status" value="1"/>
</dbReference>
<dbReference type="Pfam" id="PF00573">
    <property type="entry name" value="Ribosomal_L4"/>
    <property type="match status" value="1"/>
</dbReference>
<dbReference type="SUPFAM" id="SSF52166">
    <property type="entry name" value="Ribosomal protein L4"/>
    <property type="match status" value="1"/>
</dbReference>
<feature type="chain" id="PRO_0000129210" description="Large ribosomal subunit protein uL4">
    <location>
        <begin position="1"/>
        <end position="217"/>
    </location>
</feature>
<feature type="region of interest" description="Disordered" evidence="2">
    <location>
        <begin position="46"/>
        <end position="102"/>
    </location>
</feature>
<accession>P61062</accession>
<sequence length="217" mass="23707">MTNLKLDVLTAEGKTDGQVELPAEIFDREASVALLHQVVNAQLAAKRQGTHSAKTRAEVSGGGRKPFRQKGTGRARQGSIRAPHFTGGGISHGPKPRDYSQRTPKKMIKAALFGALTDRARHERIHVISELVAGQTPSTKSARSFIERITDRRNVLLVVGREDVTAQKSARNLPGVHILFADQLNTYDVLYSDDVVFSVEALNTFINRASGAAQEEK</sequence>
<gene>
    <name evidence="1" type="primary">rplD</name>
    <name type="ordered locus">DIP0474</name>
</gene>
<protein>
    <recommendedName>
        <fullName evidence="1">Large ribosomal subunit protein uL4</fullName>
    </recommendedName>
    <alternativeName>
        <fullName evidence="3">50S ribosomal protein L4</fullName>
    </alternativeName>
</protein>
<comment type="function">
    <text evidence="1">One of the primary rRNA binding proteins, this protein initially binds near the 5'-end of the 23S rRNA. It is important during the early stages of 50S assembly. It makes multiple contacts with different domains of the 23S rRNA in the assembled 50S subunit and ribosome.</text>
</comment>
<comment type="function">
    <text evidence="1">Forms part of the polypeptide exit tunnel.</text>
</comment>
<comment type="subunit">
    <text evidence="1">Part of the 50S ribosomal subunit.</text>
</comment>
<comment type="similarity">
    <text evidence="1">Belongs to the universal ribosomal protein uL4 family.</text>
</comment>
<name>RL4_CORDI</name>
<reference key="1">
    <citation type="journal article" date="2003" name="Nucleic Acids Res.">
        <title>The complete genome sequence and analysis of Corynebacterium diphtheriae NCTC13129.</title>
        <authorList>
            <person name="Cerdeno-Tarraga A.-M."/>
            <person name="Efstratiou A."/>
            <person name="Dover L.G."/>
            <person name="Holden M.T.G."/>
            <person name="Pallen M.J."/>
            <person name="Bentley S.D."/>
            <person name="Besra G.S."/>
            <person name="Churcher C.M."/>
            <person name="James K.D."/>
            <person name="De Zoysa A."/>
            <person name="Chillingworth T."/>
            <person name="Cronin A."/>
            <person name="Dowd L."/>
            <person name="Feltwell T."/>
            <person name="Hamlin N."/>
            <person name="Holroyd S."/>
            <person name="Jagels K."/>
            <person name="Moule S."/>
            <person name="Quail M.A."/>
            <person name="Rabbinowitsch E."/>
            <person name="Rutherford K.M."/>
            <person name="Thomson N.R."/>
            <person name="Unwin L."/>
            <person name="Whitehead S."/>
            <person name="Barrell B.G."/>
            <person name="Parkhill J."/>
        </authorList>
    </citation>
    <scope>NUCLEOTIDE SEQUENCE [LARGE SCALE GENOMIC DNA]</scope>
    <source>
        <strain>ATCC 700971 / NCTC 13129 / Biotype gravis</strain>
    </source>
</reference>
<organism>
    <name type="scientific">Corynebacterium diphtheriae (strain ATCC 700971 / NCTC 13129 / Biotype gravis)</name>
    <dbReference type="NCBI Taxonomy" id="257309"/>
    <lineage>
        <taxon>Bacteria</taxon>
        <taxon>Bacillati</taxon>
        <taxon>Actinomycetota</taxon>
        <taxon>Actinomycetes</taxon>
        <taxon>Mycobacteriales</taxon>
        <taxon>Corynebacteriaceae</taxon>
        <taxon>Corynebacterium</taxon>
    </lineage>
</organism>
<proteinExistence type="inferred from homology"/>
<evidence type="ECO:0000255" key="1">
    <source>
        <dbReference type="HAMAP-Rule" id="MF_01328"/>
    </source>
</evidence>
<evidence type="ECO:0000256" key="2">
    <source>
        <dbReference type="SAM" id="MobiDB-lite"/>
    </source>
</evidence>
<evidence type="ECO:0000305" key="3"/>